<reference key="1">
    <citation type="journal article" date="2007" name="Nat. Biotechnol.">
        <title>Complete genome sequence of the fish pathogen Flavobacterium psychrophilum.</title>
        <authorList>
            <person name="Duchaud E."/>
            <person name="Boussaha M."/>
            <person name="Loux V."/>
            <person name="Bernardet J.-F."/>
            <person name="Michel C."/>
            <person name="Kerouault B."/>
            <person name="Mondot S."/>
            <person name="Nicolas P."/>
            <person name="Bossy R."/>
            <person name="Caron C."/>
            <person name="Bessieres P."/>
            <person name="Gibrat J.-F."/>
            <person name="Claverol S."/>
            <person name="Dumetz F."/>
            <person name="Le Henaff M."/>
            <person name="Benmansour A."/>
        </authorList>
    </citation>
    <scope>NUCLEOTIDE SEQUENCE [LARGE SCALE GENOMIC DNA]</scope>
    <source>
        <strain>ATCC 49511 / DSM 21280 / CIP 103535 / JIP02/86</strain>
    </source>
</reference>
<sequence length="119" mass="13931">MAEHNDLGKFGEDLSVEFLQKKGYSILETNWTFQKAEIDIIAQKENILVIVEVKTRSSIDFGSPQDFVKPAKIQLLVKAVNEYVISNDLDLEIRFDIIAVYKERKEFKIEHFEDAFYHF</sequence>
<gene>
    <name type="ordered locus">FP2501</name>
    <name type="ORF">FP0059</name>
</gene>
<comment type="similarity">
    <text evidence="1">Belongs to the UPF0102 family.</text>
</comment>
<keyword id="KW-1185">Reference proteome</keyword>
<evidence type="ECO:0000255" key="1">
    <source>
        <dbReference type="HAMAP-Rule" id="MF_00048"/>
    </source>
</evidence>
<organism>
    <name type="scientific">Flavobacterium psychrophilum (strain ATCC 49511 / DSM 21280 / CIP 103535 / JIP02/86)</name>
    <dbReference type="NCBI Taxonomy" id="402612"/>
    <lineage>
        <taxon>Bacteria</taxon>
        <taxon>Pseudomonadati</taxon>
        <taxon>Bacteroidota</taxon>
        <taxon>Flavobacteriia</taxon>
        <taxon>Flavobacteriales</taxon>
        <taxon>Flavobacteriaceae</taxon>
        <taxon>Flavobacterium</taxon>
    </lineage>
</organism>
<name>Y059_FLAPJ</name>
<accession>A6GVQ6</accession>
<accession>R7RVC1</accession>
<dbReference type="EMBL" id="AM398681">
    <property type="protein sequence ID" value="CDF59533.1"/>
    <property type="molecule type" value="Genomic_DNA"/>
</dbReference>
<dbReference type="RefSeq" id="WP_016361979.1">
    <property type="nucleotide sequence ID" value="NC_009613.3"/>
</dbReference>
<dbReference type="RefSeq" id="YP_008057892.1">
    <property type="nucleotide sequence ID" value="NC_009613.3"/>
</dbReference>
<dbReference type="SMR" id="A6GVQ6"/>
<dbReference type="STRING" id="402612.FP2501"/>
<dbReference type="EnsemblBacteria" id="CDF59533">
    <property type="protein sequence ID" value="CDF59533"/>
    <property type="gene ID" value="FP2501"/>
</dbReference>
<dbReference type="KEGG" id="fps:FP2501"/>
<dbReference type="eggNOG" id="COG0792">
    <property type="taxonomic scope" value="Bacteria"/>
</dbReference>
<dbReference type="HOGENOM" id="CLU_115353_2_1_10"/>
<dbReference type="OrthoDB" id="9802516at2"/>
<dbReference type="Proteomes" id="UP000006394">
    <property type="component" value="Chromosome"/>
</dbReference>
<dbReference type="GO" id="GO:0003676">
    <property type="term" value="F:nucleic acid binding"/>
    <property type="evidence" value="ECO:0007669"/>
    <property type="project" value="InterPro"/>
</dbReference>
<dbReference type="CDD" id="cd20736">
    <property type="entry name" value="PoNe_Nuclease"/>
    <property type="match status" value="1"/>
</dbReference>
<dbReference type="Gene3D" id="3.40.1350.10">
    <property type="match status" value="1"/>
</dbReference>
<dbReference type="HAMAP" id="MF_00048">
    <property type="entry name" value="UPF0102"/>
    <property type="match status" value="1"/>
</dbReference>
<dbReference type="InterPro" id="IPR011335">
    <property type="entry name" value="Restrct_endonuc-II-like"/>
</dbReference>
<dbReference type="InterPro" id="IPR011856">
    <property type="entry name" value="tRNA_endonuc-like_dom_sf"/>
</dbReference>
<dbReference type="InterPro" id="IPR003509">
    <property type="entry name" value="UPF0102_YraN-like"/>
</dbReference>
<dbReference type="NCBIfam" id="NF009150">
    <property type="entry name" value="PRK12497.1-3"/>
    <property type="match status" value="1"/>
</dbReference>
<dbReference type="PANTHER" id="PTHR34039">
    <property type="entry name" value="UPF0102 PROTEIN YRAN"/>
    <property type="match status" value="1"/>
</dbReference>
<dbReference type="PANTHER" id="PTHR34039:SF1">
    <property type="entry name" value="UPF0102 PROTEIN YRAN"/>
    <property type="match status" value="1"/>
</dbReference>
<dbReference type="Pfam" id="PF02021">
    <property type="entry name" value="UPF0102"/>
    <property type="match status" value="1"/>
</dbReference>
<dbReference type="SUPFAM" id="SSF52980">
    <property type="entry name" value="Restriction endonuclease-like"/>
    <property type="match status" value="1"/>
</dbReference>
<protein>
    <recommendedName>
        <fullName evidence="1">UPF0102 protein FP2501</fullName>
    </recommendedName>
</protein>
<feature type="chain" id="PRO_0000336176" description="UPF0102 protein FP2501">
    <location>
        <begin position="1"/>
        <end position="119"/>
    </location>
</feature>
<proteinExistence type="inferred from homology"/>